<dbReference type="EC" id="4.2.3.5" evidence="1"/>
<dbReference type="EMBL" id="AE015928">
    <property type="protein sequence ID" value="AAO77191.1"/>
    <property type="molecule type" value="Genomic_DNA"/>
</dbReference>
<dbReference type="RefSeq" id="NP_810997.1">
    <property type="nucleotide sequence ID" value="NC_004663.1"/>
</dbReference>
<dbReference type="RefSeq" id="WP_008766481.1">
    <property type="nucleotide sequence ID" value="NC_004663.1"/>
</dbReference>
<dbReference type="SMR" id="Q8A602"/>
<dbReference type="FunCoup" id="Q8A602">
    <property type="interactions" value="462"/>
</dbReference>
<dbReference type="STRING" id="226186.BT_2084"/>
<dbReference type="PaxDb" id="226186-BT_2084"/>
<dbReference type="EnsemblBacteria" id="AAO77191">
    <property type="protein sequence ID" value="AAO77191"/>
    <property type="gene ID" value="BT_2084"/>
</dbReference>
<dbReference type="GeneID" id="60928073"/>
<dbReference type="KEGG" id="bth:BT_2084"/>
<dbReference type="PATRIC" id="fig|226186.12.peg.2145"/>
<dbReference type="eggNOG" id="COG0082">
    <property type="taxonomic scope" value="Bacteria"/>
</dbReference>
<dbReference type="HOGENOM" id="CLU_034547_0_2_10"/>
<dbReference type="InParanoid" id="Q8A602"/>
<dbReference type="OrthoDB" id="9771806at2"/>
<dbReference type="UniPathway" id="UPA00053">
    <property type="reaction ID" value="UER00090"/>
</dbReference>
<dbReference type="Proteomes" id="UP000001414">
    <property type="component" value="Chromosome"/>
</dbReference>
<dbReference type="GO" id="GO:0005829">
    <property type="term" value="C:cytosol"/>
    <property type="evidence" value="ECO:0000318"/>
    <property type="project" value="GO_Central"/>
</dbReference>
<dbReference type="GO" id="GO:0004107">
    <property type="term" value="F:chorismate synthase activity"/>
    <property type="evidence" value="ECO:0000318"/>
    <property type="project" value="GO_Central"/>
</dbReference>
<dbReference type="GO" id="GO:0010181">
    <property type="term" value="F:FMN binding"/>
    <property type="evidence" value="ECO:0000318"/>
    <property type="project" value="GO_Central"/>
</dbReference>
<dbReference type="GO" id="GO:0008652">
    <property type="term" value="P:amino acid biosynthetic process"/>
    <property type="evidence" value="ECO:0007669"/>
    <property type="project" value="UniProtKB-KW"/>
</dbReference>
<dbReference type="GO" id="GO:0009073">
    <property type="term" value="P:aromatic amino acid family biosynthetic process"/>
    <property type="evidence" value="ECO:0000318"/>
    <property type="project" value="GO_Central"/>
</dbReference>
<dbReference type="GO" id="GO:0009423">
    <property type="term" value="P:chorismate biosynthetic process"/>
    <property type="evidence" value="ECO:0000318"/>
    <property type="project" value="GO_Central"/>
</dbReference>
<dbReference type="CDD" id="cd07304">
    <property type="entry name" value="Chorismate_synthase"/>
    <property type="match status" value="1"/>
</dbReference>
<dbReference type="FunFam" id="3.60.150.10:FF:000003">
    <property type="entry name" value="Chorismate synthase"/>
    <property type="match status" value="1"/>
</dbReference>
<dbReference type="Gene3D" id="3.60.150.10">
    <property type="entry name" value="Chorismate synthase AroC"/>
    <property type="match status" value="1"/>
</dbReference>
<dbReference type="HAMAP" id="MF_00300">
    <property type="entry name" value="Chorismate_synth"/>
    <property type="match status" value="1"/>
</dbReference>
<dbReference type="InterPro" id="IPR000453">
    <property type="entry name" value="Chorismate_synth"/>
</dbReference>
<dbReference type="InterPro" id="IPR035904">
    <property type="entry name" value="Chorismate_synth_AroC_sf"/>
</dbReference>
<dbReference type="InterPro" id="IPR020541">
    <property type="entry name" value="Chorismate_synthase_CS"/>
</dbReference>
<dbReference type="NCBIfam" id="TIGR00033">
    <property type="entry name" value="aroC"/>
    <property type="match status" value="1"/>
</dbReference>
<dbReference type="NCBIfam" id="NF003793">
    <property type="entry name" value="PRK05382.1"/>
    <property type="match status" value="1"/>
</dbReference>
<dbReference type="PANTHER" id="PTHR21085">
    <property type="entry name" value="CHORISMATE SYNTHASE"/>
    <property type="match status" value="1"/>
</dbReference>
<dbReference type="PANTHER" id="PTHR21085:SF0">
    <property type="entry name" value="CHORISMATE SYNTHASE"/>
    <property type="match status" value="1"/>
</dbReference>
<dbReference type="Pfam" id="PF01264">
    <property type="entry name" value="Chorismate_synt"/>
    <property type="match status" value="1"/>
</dbReference>
<dbReference type="PIRSF" id="PIRSF001456">
    <property type="entry name" value="Chorismate_synth"/>
    <property type="match status" value="1"/>
</dbReference>
<dbReference type="SUPFAM" id="SSF103263">
    <property type="entry name" value="Chorismate synthase, AroC"/>
    <property type="match status" value="1"/>
</dbReference>
<dbReference type="PROSITE" id="PS00787">
    <property type="entry name" value="CHORISMATE_SYNTHASE_1"/>
    <property type="match status" value="1"/>
</dbReference>
<dbReference type="PROSITE" id="PS00788">
    <property type="entry name" value="CHORISMATE_SYNTHASE_2"/>
    <property type="match status" value="1"/>
</dbReference>
<proteinExistence type="inferred from homology"/>
<organism>
    <name type="scientific">Bacteroides thetaiotaomicron (strain ATCC 29148 / DSM 2079 / JCM 5827 / CCUG 10774 / NCTC 10582 / VPI-5482 / E50)</name>
    <dbReference type="NCBI Taxonomy" id="226186"/>
    <lineage>
        <taxon>Bacteria</taxon>
        <taxon>Pseudomonadati</taxon>
        <taxon>Bacteroidota</taxon>
        <taxon>Bacteroidia</taxon>
        <taxon>Bacteroidales</taxon>
        <taxon>Bacteroidaceae</taxon>
        <taxon>Bacteroides</taxon>
    </lineage>
</organism>
<reference key="1">
    <citation type="journal article" date="2003" name="Science">
        <title>A genomic view of the human-Bacteroides thetaiotaomicron symbiosis.</title>
        <authorList>
            <person name="Xu J."/>
            <person name="Bjursell M.K."/>
            <person name="Himrod J."/>
            <person name="Deng S."/>
            <person name="Carmichael L.K."/>
            <person name="Chiang H.C."/>
            <person name="Hooper L.V."/>
            <person name="Gordon J.I."/>
        </authorList>
    </citation>
    <scope>NUCLEOTIDE SEQUENCE [LARGE SCALE GENOMIC DNA]</scope>
    <source>
        <strain>ATCC 29148 / DSM 2079 / JCM 5827 / CCUG 10774 / NCTC 10582 / VPI-5482 / E50</strain>
    </source>
</reference>
<protein>
    <recommendedName>
        <fullName evidence="1">Chorismate synthase</fullName>
        <shortName evidence="1">CS</shortName>
        <ecNumber evidence="1">4.2.3.5</ecNumber>
    </recommendedName>
    <alternativeName>
        <fullName evidence="1">5-enolpyruvylshikimate-3-phosphate phospholyase</fullName>
    </alternativeName>
</protein>
<gene>
    <name evidence="1" type="primary">aroC</name>
    <name type="ordered locus">BT_2084</name>
</gene>
<name>AROC_BACTN</name>
<comment type="function">
    <text evidence="1">Catalyzes the anti-1,4-elimination of the C-3 phosphate and the C-6 proR hydrogen from 5-enolpyruvylshikimate-3-phosphate (EPSP) to yield chorismate, which is the branch point compound that serves as the starting substrate for the three terminal pathways of aromatic amino acid biosynthesis. This reaction introduces a second double bond into the aromatic ring system.</text>
</comment>
<comment type="catalytic activity">
    <reaction evidence="1">
        <text>5-O-(1-carboxyvinyl)-3-phosphoshikimate = chorismate + phosphate</text>
        <dbReference type="Rhea" id="RHEA:21020"/>
        <dbReference type="ChEBI" id="CHEBI:29748"/>
        <dbReference type="ChEBI" id="CHEBI:43474"/>
        <dbReference type="ChEBI" id="CHEBI:57701"/>
        <dbReference type="EC" id="4.2.3.5"/>
    </reaction>
</comment>
<comment type="cofactor">
    <cofactor evidence="1">
        <name>FMNH2</name>
        <dbReference type="ChEBI" id="CHEBI:57618"/>
    </cofactor>
    <text evidence="1">Reduced FMN (FMNH(2)).</text>
</comment>
<comment type="pathway">
    <text evidence="1">Metabolic intermediate biosynthesis; chorismate biosynthesis; chorismate from D-erythrose 4-phosphate and phosphoenolpyruvate: step 7/7.</text>
</comment>
<comment type="subunit">
    <text evidence="1">Homotetramer.</text>
</comment>
<comment type="similarity">
    <text evidence="1">Belongs to the chorismate synthase family.</text>
</comment>
<feature type="chain" id="PRO_0000140554" description="Chorismate synthase">
    <location>
        <begin position="1"/>
        <end position="358"/>
    </location>
</feature>
<feature type="binding site" evidence="1">
    <location>
        <position position="47"/>
    </location>
    <ligand>
        <name>NADP(+)</name>
        <dbReference type="ChEBI" id="CHEBI:58349"/>
    </ligand>
</feature>
<feature type="binding site" evidence="1">
    <location>
        <begin position="124"/>
        <end position="126"/>
    </location>
    <ligand>
        <name>FMN</name>
        <dbReference type="ChEBI" id="CHEBI:58210"/>
    </ligand>
</feature>
<feature type="binding site" evidence="1">
    <location>
        <begin position="240"/>
        <end position="241"/>
    </location>
    <ligand>
        <name>FMN</name>
        <dbReference type="ChEBI" id="CHEBI:58210"/>
    </ligand>
</feature>
<feature type="binding site" evidence="1">
    <location>
        <position position="284"/>
    </location>
    <ligand>
        <name>FMN</name>
        <dbReference type="ChEBI" id="CHEBI:58210"/>
    </ligand>
</feature>
<feature type="binding site" evidence="1">
    <location>
        <begin position="299"/>
        <end position="303"/>
    </location>
    <ligand>
        <name>FMN</name>
        <dbReference type="ChEBI" id="CHEBI:58210"/>
    </ligand>
</feature>
<feature type="binding site" evidence="1">
    <location>
        <position position="325"/>
    </location>
    <ligand>
        <name>FMN</name>
        <dbReference type="ChEBI" id="CHEBI:58210"/>
    </ligand>
</feature>
<keyword id="KW-0028">Amino-acid biosynthesis</keyword>
<keyword id="KW-0057">Aromatic amino acid biosynthesis</keyword>
<keyword id="KW-0274">FAD</keyword>
<keyword id="KW-0285">Flavoprotein</keyword>
<keyword id="KW-0288">FMN</keyword>
<keyword id="KW-0456">Lyase</keyword>
<keyword id="KW-0521">NADP</keyword>
<keyword id="KW-1185">Reference proteome</keyword>
<evidence type="ECO:0000255" key="1">
    <source>
        <dbReference type="HAMAP-Rule" id="MF_00300"/>
    </source>
</evidence>
<sequence length="358" mass="39115">MFNSFGNIFRLTSFGESHGKGVGGVIDGFPSGITIDEEFVQQELNRRRPGQSILTTPRKEADKVEFLSGIFEGKSTGCPIGFIVWNENQHSNDYNNLKEVYRPSHADYTYKVKYGIRDHRGGGRSSARETISRVVAGALAKLALRQLGISITAYTSQVGAIKLEGTYSDYDLDLIETNDVRCPDPEKAKEMADLIYKVKGEGDTIGGTLTCVIKGCPIGLGQPVFGKLHAALGNAMLSINAAKAFEYGEGFKGLKMKGSEQNDVFFNNNGRIETHTNHSGGIQGGISNGQDIYFRVVFKPIATLLMEQETVNIDGVDTTLKARGRHDACVLPRAVPIVEAMAAMTILDYYLLDKTTQL</sequence>
<accession>Q8A602</accession>